<evidence type="ECO:0000255" key="1">
    <source>
        <dbReference type="HAMAP-Rule" id="MF_00388"/>
    </source>
</evidence>
<comment type="function">
    <text evidence="1">Catalyzes the hydrolysis of UDP-3-O-myristoyl-N-acetylglucosamine to form UDP-3-O-myristoylglucosamine and acetate, the committed step in lipid A biosynthesis.</text>
</comment>
<comment type="catalytic activity">
    <reaction evidence="1">
        <text>a UDP-3-O-[(3R)-3-hydroxyacyl]-N-acetyl-alpha-D-glucosamine + H2O = a UDP-3-O-[(3R)-3-hydroxyacyl]-alpha-D-glucosamine + acetate</text>
        <dbReference type="Rhea" id="RHEA:67816"/>
        <dbReference type="ChEBI" id="CHEBI:15377"/>
        <dbReference type="ChEBI" id="CHEBI:30089"/>
        <dbReference type="ChEBI" id="CHEBI:137740"/>
        <dbReference type="ChEBI" id="CHEBI:173225"/>
        <dbReference type="EC" id="3.5.1.108"/>
    </reaction>
</comment>
<comment type="cofactor">
    <cofactor evidence="1">
        <name>Zn(2+)</name>
        <dbReference type="ChEBI" id="CHEBI:29105"/>
    </cofactor>
</comment>
<comment type="pathway">
    <text evidence="1">Glycolipid biosynthesis; lipid IV(A) biosynthesis; lipid IV(A) from (3R)-3-hydroxytetradecanoyl-[acyl-carrier-protein] and UDP-N-acetyl-alpha-D-glucosamine: step 2/6.</text>
</comment>
<comment type="similarity">
    <text evidence="1">Belongs to the LpxC family.</text>
</comment>
<sequence length="305" mass="33985">MIKQRTLKRIVQATGVGLHTGKKVTLTLRPAPANTGVIYRRTDLNPPVDFPADAKSVRDTMLCTCLVNEHDVRISTVEHLNAALAGLGIDNIVIEVNAPEIPIMDGSAAPFVYLLLDAGIDELNCAKKFVRIKETVRVEDGDKWAEFRPYNGFTLDFTIDFNHPAIDSSSQRYAMNFSADAFMRQISRARTFGFMRDIEYLQSRGLCLGGSFDCAIVVDDYRVLNEDGLRFEDEFVRHKMLDAIGDLFMCGHNIIGAFTAYKSGHALNNKLLQAVLAKQEAWEFVTFQDDAELPLAFKAPSTVLA</sequence>
<protein>
    <recommendedName>
        <fullName evidence="1">UDP-3-O-acyl-N-acetylglucosamine deacetylase</fullName>
        <shortName evidence="1">UDP-3-O-acyl-GlcNAc deacetylase</shortName>
        <ecNumber evidence="1">3.5.1.108</ecNumber>
    </recommendedName>
    <alternativeName>
        <fullName evidence="1">UDP-3-O-[R-3-hydroxymyristoyl]-N-acetylglucosamine deacetylase</fullName>
    </alternativeName>
</protein>
<gene>
    <name evidence="1" type="primary">lpxC</name>
    <name type="ordered locus">SPAB_00168</name>
</gene>
<organism>
    <name type="scientific">Salmonella paratyphi B (strain ATCC BAA-1250 / SPB7)</name>
    <dbReference type="NCBI Taxonomy" id="1016998"/>
    <lineage>
        <taxon>Bacteria</taxon>
        <taxon>Pseudomonadati</taxon>
        <taxon>Pseudomonadota</taxon>
        <taxon>Gammaproteobacteria</taxon>
        <taxon>Enterobacterales</taxon>
        <taxon>Enterobacteriaceae</taxon>
        <taxon>Salmonella</taxon>
    </lineage>
</organism>
<name>LPXC_SALPB</name>
<feature type="chain" id="PRO_1000080226" description="UDP-3-O-acyl-N-acetylglucosamine deacetylase">
    <location>
        <begin position="1"/>
        <end position="305"/>
    </location>
</feature>
<feature type="active site" description="Proton donor" evidence="1">
    <location>
        <position position="265"/>
    </location>
</feature>
<feature type="binding site" evidence="1">
    <location>
        <position position="79"/>
    </location>
    <ligand>
        <name>Zn(2+)</name>
        <dbReference type="ChEBI" id="CHEBI:29105"/>
    </ligand>
</feature>
<feature type="binding site" evidence="1">
    <location>
        <position position="238"/>
    </location>
    <ligand>
        <name>Zn(2+)</name>
        <dbReference type="ChEBI" id="CHEBI:29105"/>
    </ligand>
</feature>
<feature type="binding site" evidence="1">
    <location>
        <position position="242"/>
    </location>
    <ligand>
        <name>Zn(2+)</name>
        <dbReference type="ChEBI" id="CHEBI:29105"/>
    </ligand>
</feature>
<keyword id="KW-0378">Hydrolase</keyword>
<keyword id="KW-0441">Lipid A biosynthesis</keyword>
<keyword id="KW-0444">Lipid biosynthesis</keyword>
<keyword id="KW-0443">Lipid metabolism</keyword>
<keyword id="KW-0479">Metal-binding</keyword>
<keyword id="KW-0862">Zinc</keyword>
<reference key="1">
    <citation type="submission" date="2007-11" db="EMBL/GenBank/DDBJ databases">
        <authorList>
            <consortium name="The Salmonella enterica serovar Paratyphi B Genome Sequencing Project"/>
            <person name="McClelland M."/>
            <person name="Sanderson E.K."/>
            <person name="Porwollik S."/>
            <person name="Spieth J."/>
            <person name="Clifton W.S."/>
            <person name="Fulton R."/>
            <person name="Cordes M."/>
            <person name="Wollam A."/>
            <person name="Shah N."/>
            <person name="Pepin K."/>
            <person name="Bhonagiri V."/>
            <person name="Nash W."/>
            <person name="Johnson M."/>
            <person name="Thiruvilangam P."/>
            <person name="Wilson R."/>
        </authorList>
    </citation>
    <scope>NUCLEOTIDE SEQUENCE [LARGE SCALE GENOMIC DNA]</scope>
    <source>
        <strain>ATCC BAA-1250 / SPB7</strain>
    </source>
</reference>
<dbReference type="EC" id="3.5.1.108" evidence="1"/>
<dbReference type="EMBL" id="CP000886">
    <property type="protein sequence ID" value="ABX65610.1"/>
    <property type="molecule type" value="Genomic_DNA"/>
</dbReference>
<dbReference type="RefSeq" id="WP_000595487.1">
    <property type="nucleotide sequence ID" value="NC_010102.1"/>
</dbReference>
<dbReference type="SMR" id="A9MZM5"/>
<dbReference type="KEGG" id="spq:SPAB_00168"/>
<dbReference type="PATRIC" id="fig|1016998.12.peg.160"/>
<dbReference type="HOGENOM" id="CLU_046528_1_0_6"/>
<dbReference type="BioCyc" id="SENT1016998:SPAB_RS00670-MONOMER"/>
<dbReference type="UniPathway" id="UPA00359">
    <property type="reaction ID" value="UER00478"/>
</dbReference>
<dbReference type="Proteomes" id="UP000008556">
    <property type="component" value="Chromosome"/>
</dbReference>
<dbReference type="GO" id="GO:0016020">
    <property type="term" value="C:membrane"/>
    <property type="evidence" value="ECO:0007669"/>
    <property type="project" value="GOC"/>
</dbReference>
<dbReference type="GO" id="GO:0046872">
    <property type="term" value="F:metal ion binding"/>
    <property type="evidence" value="ECO:0007669"/>
    <property type="project" value="UniProtKB-KW"/>
</dbReference>
<dbReference type="GO" id="GO:0103117">
    <property type="term" value="F:UDP-3-O-acyl-N-acetylglucosamine deacetylase activity"/>
    <property type="evidence" value="ECO:0007669"/>
    <property type="project" value="UniProtKB-UniRule"/>
</dbReference>
<dbReference type="GO" id="GO:0009245">
    <property type="term" value="P:lipid A biosynthetic process"/>
    <property type="evidence" value="ECO:0007669"/>
    <property type="project" value="UniProtKB-UniRule"/>
</dbReference>
<dbReference type="FunFam" id="3.30.1700.10:FF:000001">
    <property type="entry name" value="UDP-3-O-acyl-N-acetylglucosamine deacetylase"/>
    <property type="match status" value="1"/>
</dbReference>
<dbReference type="FunFam" id="3.30.230.20:FF:000001">
    <property type="entry name" value="UDP-3-O-acyl-N-acetylglucosamine deacetylase"/>
    <property type="match status" value="1"/>
</dbReference>
<dbReference type="Gene3D" id="3.30.230.20">
    <property type="entry name" value="lpxc deacetylase, domain 1"/>
    <property type="match status" value="1"/>
</dbReference>
<dbReference type="Gene3D" id="3.30.1700.10">
    <property type="entry name" value="lpxc deacetylase, domain 2"/>
    <property type="match status" value="1"/>
</dbReference>
<dbReference type="HAMAP" id="MF_00388">
    <property type="entry name" value="LpxC"/>
    <property type="match status" value="1"/>
</dbReference>
<dbReference type="InterPro" id="IPR020568">
    <property type="entry name" value="Ribosomal_Su5_D2-typ_SF"/>
</dbReference>
<dbReference type="InterPro" id="IPR004463">
    <property type="entry name" value="UDP-acyl_GlcNac_deAcase"/>
</dbReference>
<dbReference type="InterPro" id="IPR011334">
    <property type="entry name" value="UDP-acyl_GlcNac_deAcase_C"/>
</dbReference>
<dbReference type="InterPro" id="IPR015870">
    <property type="entry name" value="UDP-acyl_N-AcGlcN_deAcase_N"/>
</dbReference>
<dbReference type="NCBIfam" id="TIGR00325">
    <property type="entry name" value="lpxC"/>
    <property type="match status" value="1"/>
</dbReference>
<dbReference type="PANTHER" id="PTHR33694">
    <property type="entry name" value="UDP-3-O-ACYL-N-ACETYLGLUCOSAMINE DEACETYLASE 1, MITOCHONDRIAL-RELATED"/>
    <property type="match status" value="1"/>
</dbReference>
<dbReference type="PANTHER" id="PTHR33694:SF1">
    <property type="entry name" value="UDP-3-O-ACYL-N-ACETYLGLUCOSAMINE DEACETYLASE 1, MITOCHONDRIAL-RELATED"/>
    <property type="match status" value="1"/>
</dbReference>
<dbReference type="Pfam" id="PF03331">
    <property type="entry name" value="LpxC"/>
    <property type="match status" value="1"/>
</dbReference>
<dbReference type="SUPFAM" id="SSF54211">
    <property type="entry name" value="Ribosomal protein S5 domain 2-like"/>
    <property type="match status" value="2"/>
</dbReference>
<accession>A9MZM5</accession>
<proteinExistence type="inferred from homology"/>